<gene>
    <name evidence="1" type="primary">pheS</name>
    <name type="ordered locus">VF_1235</name>
</gene>
<reference key="1">
    <citation type="journal article" date="2005" name="Proc. Natl. Acad. Sci. U.S.A.">
        <title>Complete genome sequence of Vibrio fischeri: a symbiotic bacterium with pathogenic congeners.</title>
        <authorList>
            <person name="Ruby E.G."/>
            <person name="Urbanowski M."/>
            <person name="Campbell J."/>
            <person name="Dunn A."/>
            <person name="Faini M."/>
            <person name="Gunsalus R."/>
            <person name="Lostroh P."/>
            <person name="Lupp C."/>
            <person name="McCann J."/>
            <person name="Millikan D."/>
            <person name="Schaefer A."/>
            <person name="Stabb E."/>
            <person name="Stevens A."/>
            <person name="Visick K."/>
            <person name="Whistler C."/>
            <person name="Greenberg E.P."/>
        </authorList>
    </citation>
    <scope>NUCLEOTIDE SEQUENCE [LARGE SCALE GENOMIC DNA]</scope>
    <source>
        <strain>ATCC 700601 / ES114</strain>
    </source>
</reference>
<organism>
    <name type="scientific">Aliivibrio fischeri (strain ATCC 700601 / ES114)</name>
    <name type="common">Vibrio fischeri</name>
    <dbReference type="NCBI Taxonomy" id="312309"/>
    <lineage>
        <taxon>Bacteria</taxon>
        <taxon>Pseudomonadati</taxon>
        <taxon>Pseudomonadota</taxon>
        <taxon>Gammaproteobacteria</taxon>
        <taxon>Vibrionales</taxon>
        <taxon>Vibrionaceae</taxon>
        <taxon>Aliivibrio</taxon>
    </lineage>
</organism>
<accession>Q5E5G6</accession>
<keyword id="KW-0030">Aminoacyl-tRNA synthetase</keyword>
<keyword id="KW-0067">ATP-binding</keyword>
<keyword id="KW-0963">Cytoplasm</keyword>
<keyword id="KW-0436">Ligase</keyword>
<keyword id="KW-0460">Magnesium</keyword>
<keyword id="KW-0479">Metal-binding</keyword>
<keyword id="KW-0547">Nucleotide-binding</keyword>
<keyword id="KW-0648">Protein biosynthesis</keyword>
<keyword id="KW-1185">Reference proteome</keyword>
<feature type="chain" id="PRO_0000232037" description="Phenylalanine--tRNA ligase alpha subunit">
    <location>
        <begin position="1"/>
        <end position="327"/>
    </location>
</feature>
<feature type="binding site" evidence="1">
    <location>
        <position position="252"/>
    </location>
    <ligand>
        <name>Mg(2+)</name>
        <dbReference type="ChEBI" id="CHEBI:18420"/>
        <note>shared with beta subunit</note>
    </ligand>
</feature>
<protein>
    <recommendedName>
        <fullName evidence="1">Phenylalanine--tRNA ligase alpha subunit</fullName>
        <ecNumber evidence="1">6.1.1.20</ecNumber>
    </recommendedName>
    <alternativeName>
        <fullName evidence="1">Phenylalanyl-tRNA synthetase alpha subunit</fullName>
        <shortName evidence="1">PheRS</shortName>
    </alternativeName>
</protein>
<evidence type="ECO:0000255" key="1">
    <source>
        <dbReference type="HAMAP-Rule" id="MF_00281"/>
    </source>
</evidence>
<sequence>MQHLDEIIANATAEIEQAGSLVALDEVRVQYLGKKGHLTLQLQGLGKLDPSERREAGQLINKGKQAVQAMLTERKDALQTAELEAKLAAETIDVSLPGRRIENGGLHPVTRTVERIEQFFGELGFSTESGPEIEDAFHNFDALNIAEDHPARTDHDTFFFNPDLMLRTHTSGVQIRTMENGKPPFRFIAPGRVYRNDYDQTHTPMFHQVEGMLVDENVNFAQLKGILHDFLCNFFEEEVEVRFRPSFFPFTEPSAEVDVKRKDGKWLEVLGCGMVHPNVLRSVGIDPEKYSGFAFGMGVERLTMLRYGVNDLRAFFENDLRFLKQFK</sequence>
<comment type="catalytic activity">
    <reaction evidence="1">
        <text>tRNA(Phe) + L-phenylalanine + ATP = L-phenylalanyl-tRNA(Phe) + AMP + diphosphate + H(+)</text>
        <dbReference type="Rhea" id="RHEA:19413"/>
        <dbReference type="Rhea" id="RHEA-COMP:9668"/>
        <dbReference type="Rhea" id="RHEA-COMP:9699"/>
        <dbReference type="ChEBI" id="CHEBI:15378"/>
        <dbReference type="ChEBI" id="CHEBI:30616"/>
        <dbReference type="ChEBI" id="CHEBI:33019"/>
        <dbReference type="ChEBI" id="CHEBI:58095"/>
        <dbReference type="ChEBI" id="CHEBI:78442"/>
        <dbReference type="ChEBI" id="CHEBI:78531"/>
        <dbReference type="ChEBI" id="CHEBI:456215"/>
        <dbReference type="EC" id="6.1.1.20"/>
    </reaction>
</comment>
<comment type="cofactor">
    <cofactor evidence="1">
        <name>Mg(2+)</name>
        <dbReference type="ChEBI" id="CHEBI:18420"/>
    </cofactor>
    <text evidence="1">Binds 2 magnesium ions per tetramer.</text>
</comment>
<comment type="subunit">
    <text evidence="1">Tetramer of two alpha and two beta subunits.</text>
</comment>
<comment type="subcellular location">
    <subcellularLocation>
        <location evidence="1">Cytoplasm</location>
    </subcellularLocation>
</comment>
<comment type="similarity">
    <text evidence="1">Belongs to the class-II aminoacyl-tRNA synthetase family. Phe-tRNA synthetase alpha subunit type 1 subfamily.</text>
</comment>
<dbReference type="EC" id="6.1.1.20" evidence="1"/>
<dbReference type="EMBL" id="CP000020">
    <property type="protein sequence ID" value="AAW85730.1"/>
    <property type="molecule type" value="Genomic_DNA"/>
</dbReference>
<dbReference type="RefSeq" id="WP_005419116.1">
    <property type="nucleotide sequence ID" value="NZ_CAWLES010000001.1"/>
</dbReference>
<dbReference type="RefSeq" id="YP_204618.1">
    <property type="nucleotide sequence ID" value="NC_006840.2"/>
</dbReference>
<dbReference type="SMR" id="Q5E5G6"/>
<dbReference type="STRING" id="312309.VF_1235"/>
<dbReference type="EnsemblBacteria" id="AAW85730">
    <property type="protein sequence ID" value="AAW85730"/>
    <property type="gene ID" value="VF_1235"/>
</dbReference>
<dbReference type="GeneID" id="54163906"/>
<dbReference type="KEGG" id="vfi:VF_1235"/>
<dbReference type="PATRIC" id="fig|312309.11.peg.1242"/>
<dbReference type="eggNOG" id="COG0016">
    <property type="taxonomic scope" value="Bacteria"/>
</dbReference>
<dbReference type="HOGENOM" id="CLU_025086_0_1_6"/>
<dbReference type="OrthoDB" id="9800719at2"/>
<dbReference type="Proteomes" id="UP000000537">
    <property type="component" value="Chromosome I"/>
</dbReference>
<dbReference type="GO" id="GO:0005737">
    <property type="term" value="C:cytoplasm"/>
    <property type="evidence" value="ECO:0007669"/>
    <property type="project" value="UniProtKB-SubCell"/>
</dbReference>
<dbReference type="GO" id="GO:0005524">
    <property type="term" value="F:ATP binding"/>
    <property type="evidence" value="ECO:0007669"/>
    <property type="project" value="UniProtKB-UniRule"/>
</dbReference>
<dbReference type="GO" id="GO:0000287">
    <property type="term" value="F:magnesium ion binding"/>
    <property type="evidence" value="ECO:0007669"/>
    <property type="project" value="UniProtKB-UniRule"/>
</dbReference>
<dbReference type="GO" id="GO:0004826">
    <property type="term" value="F:phenylalanine-tRNA ligase activity"/>
    <property type="evidence" value="ECO:0007669"/>
    <property type="project" value="UniProtKB-UniRule"/>
</dbReference>
<dbReference type="GO" id="GO:0000049">
    <property type="term" value="F:tRNA binding"/>
    <property type="evidence" value="ECO:0007669"/>
    <property type="project" value="InterPro"/>
</dbReference>
<dbReference type="GO" id="GO:0006432">
    <property type="term" value="P:phenylalanyl-tRNA aminoacylation"/>
    <property type="evidence" value="ECO:0007669"/>
    <property type="project" value="UniProtKB-UniRule"/>
</dbReference>
<dbReference type="CDD" id="cd00496">
    <property type="entry name" value="PheRS_alpha_core"/>
    <property type="match status" value="1"/>
</dbReference>
<dbReference type="FunFam" id="3.30.930.10:FF:000003">
    <property type="entry name" value="Phenylalanine--tRNA ligase alpha subunit"/>
    <property type="match status" value="1"/>
</dbReference>
<dbReference type="Gene3D" id="3.30.930.10">
    <property type="entry name" value="Bira Bifunctional Protein, Domain 2"/>
    <property type="match status" value="1"/>
</dbReference>
<dbReference type="HAMAP" id="MF_00281">
    <property type="entry name" value="Phe_tRNA_synth_alpha1"/>
    <property type="match status" value="1"/>
</dbReference>
<dbReference type="InterPro" id="IPR006195">
    <property type="entry name" value="aa-tRNA-synth_II"/>
</dbReference>
<dbReference type="InterPro" id="IPR045864">
    <property type="entry name" value="aa-tRNA-synth_II/BPL/LPL"/>
</dbReference>
<dbReference type="InterPro" id="IPR004529">
    <property type="entry name" value="Phe-tRNA-synth_IIc_asu"/>
</dbReference>
<dbReference type="InterPro" id="IPR004188">
    <property type="entry name" value="Phe-tRNA_ligase_II_N"/>
</dbReference>
<dbReference type="InterPro" id="IPR022911">
    <property type="entry name" value="Phe_tRNA_ligase_alpha1_bac"/>
</dbReference>
<dbReference type="InterPro" id="IPR002319">
    <property type="entry name" value="Phenylalanyl-tRNA_Synthase"/>
</dbReference>
<dbReference type="InterPro" id="IPR010978">
    <property type="entry name" value="tRNA-bd_arm"/>
</dbReference>
<dbReference type="NCBIfam" id="TIGR00468">
    <property type="entry name" value="pheS"/>
    <property type="match status" value="1"/>
</dbReference>
<dbReference type="PANTHER" id="PTHR11538:SF41">
    <property type="entry name" value="PHENYLALANINE--TRNA LIGASE, MITOCHONDRIAL"/>
    <property type="match status" value="1"/>
</dbReference>
<dbReference type="PANTHER" id="PTHR11538">
    <property type="entry name" value="PHENYLALANYL-TRNA SYNTHETASE"/>
    <property type="match status" value="1"/>
</dbReference>
<dbReference type="Pfam" id="PF02912">
    <property type="entry name" value="Phe_tRNA-synt_N"/>
    <property type="match status" value="1"/>
</dbReference>
<dbReference type="Pfam" id="PF01409">
    <property type="entry name" value="tRNA-synt_2d"/>
    <property type="match status" value="1"/>
</dbReference>
<dbReference type="SUPFAM" id="SSF55681">
    <property type="entry name" value="Class II aaRS and biotin synthetases"/>
    <property type="match status" value="1"/>
</dbReference>
<dbReference type="SUPFAM" id="SSF46589">
    <property type="entry name" value="tRNA-binding arm"/>
    <property type="match status" value="1"/>
</dbReference>
<dbReference type="PROSITE" id="PS50862">
    <property type="entry name" value="AA_TRNA_LIGASE_II"/>
    <property type="match status" value="1"/>
</dbReference>
<name>SYFA_ALIF1</name>
<proteinExistence type="inferred from homology"/>